<evidence type="ECO:0000250" key="1">
    <source>
        <dbReference type="UniProtKB" id="Q12402"/>
    </source>
</evidence>
<evidence type="ECO:0000255" key="2"/>
<evidence type="ECO:0000305" key="3"/>
<organism>
    <name type="scientific">Yarrowia lipolytica (strain CLIB 122 / E 150)</name>
    <name type="common">Yeast</name>
    <name type="synonym">Candida lipolytica</name>
    <dbReference type="NCBI Taxonomy" id="284591"/>
    <lineage>
        <taxon>Eukaryota</taxon>
        <taxon>Fungi</taxon>
        <taxon>Dikarya</taxon>
        <taxon>Ascomycota</taxon>
        <taxon>Saccharomycotina</taxon>
        <taxon>Dipodascomycetes</taxon>
        <taxon>Dipodascales</taxon>
        <taxon>Dipodascales incertae sedis</taxon>
        <taxon>Yarrowia</taxon>
    </lineage>
</organism>
<sequence length="189" mass="20958">MSQIIDQVQAALQNIDKELEKYPALKELEKQIPVPKSYILLGFVGFYFILIFLNIGGIGQLLSNIAGLVIPGYYSLLALETPGKADDTQYLTYWVVFATLNVFEFWSKAILYWVPFYYLFKTAFLLYIGLPQYGGAELVYKAIVKPLAQKLVNIQPHGGPSDSLKAQAQSAVDAAESHVPQGHSTGVSH</sequence>
<dbReference type="EMBL" id="CR382128">
    <property type="protein sequence ID" value="CAG83358.2"/>
    <property type="molecule type" value="Genomic_DNA"/>
</dbReference>
<dbReference type="RefSeq" id="XP_501105.2">
    <property type="nucleotide sequence ID" value="XM_501105.2"/>
</dbReference>
<dbReference type="FunCoup" id="Q6CE07">
    <property type="interactions" value="388"/>
</dbReference>
<dbReference type="STRING" id="284591.Q6CE07"/>
<dbReference type="EnsemblFungi" id="CAG83358">
    <property type="protein sequence ID" value="CAG83358"/>
    <property type="gene ID" value="YALI0_B19668g"/>
</dbReference>
<dbReference type="KEGG" id="yli:2907149"/>
<dbReference type="VEuPathDB" id="FungiDB:YALI0_B19668g"/>
<dbReference type="HOGENOM" id="CLU_028431_2_1_1"/>
<dbReference type="InParanoid" id="Q6CE07"/>
<dbReference type="OMA" id="CMIPGPW"/>
<dbReference type="OrthoDB" id="59562at4891"/>
<dbReference type="Proteomes" id="UP000001300">
    <property type="component" value="Chromosome B"/>
</dbReference>
<dbReference type="GO" id="GO:0032153">
    <property type="term" value="C:cell division site"/>
    <property type="evidence" value="ECO:0007669"/>
    <property type="project" value="EnsemblFungi"/>
</dbReference>
<dbReference type="GO" id="GO:0032541">
    <property type="term" value="C:cortical endoplasmic reticulum"/>
    <property type="evidence" value="ECO:0007669"/>
    <property type="project" value="EnsemblFungi"/>
</dbReference>
<dbReference type="GO" id="GO:0005789">
    <property type="term" value="C:endoplasmic reticulum membrane"/>
    <property type="evidence" value="ECO:0007669"/>
    <property type="project" value="UniProtKB-SubCell"/>
</dbReference>
<dbReference type="GO" id="GO:0000139">
    <property type="term" value="C:Golgi membrane"/>
    <property type="evidence" value="ECO:0007669"/>
    <property type="project" value="UniProtKB-SubCell"/>
</dbReference>
<dbReference type="GO" id="GO:0005635">
    <property type="term" value="C:nuclear envelope"/>
    <property type="evidence" value="ECO:0007669"/>
    <property type="project" value="EnsemblFungi"/>
</dbReference>
<dbReference type="GO" id="GO:0180020">
    <property type="term" value="F:membrane bending activity"/>
    <property type="evidence" value="ECO:0007669"/>
    <property type="project" value="EnsemblFungi"/>
</dbReference>
<dbReference type="GO" id="GO:1990809">
    <property type="term" value="P:endoplasmic reticulum tubular network membrane organization"/>
    <property type="evidence" value="ECO:0007669"/>
    <property type="project" value="EnsemblFungi"/>
</dbReference>
<dbReference type="InterPro" id="IPR004345">
    <property type="entry name" value="TB2_DP1_HVA22"/>
</dbReference>
<dbReference type="PANTHER" id="PTHR12300">
    <property type="entry name" value="HVA22-LIKE PROTEINS"/>
    <property type="match status" value="1"/>
</dbReference>
<dbReference type="PANTHER" id="PTHR12300:SF161">
    <property type="entry name" value="RECEPTOR EXPRESSION-ENHANCING PROTEIN"/>
    <property type="match status" value="1"/>
</dbReference>
<dbReference type="Pfam" id="PF03134">
    <property type="entry name" value="TB2_DP1_HVA22"/>
    <property type="match status" value="1"/>
</dbReference>
<keyword id="KW-0256">Endoplasmic reticulum</keyword>
<keyword id="KW-0333">Golgi apparatus</keyword>
<keyword id="KW-0472">Membrane</keyword>
<keyword id="KW-1185">Reference proteome</keyword>
<keyword id="KW-0812">Transmembrane</keyword>
<keyword id="KW-1133">Transmembrane helix</keyword>
<accession>Q6CE07</accession>
<feature type="chain" id="PRO_0000101858" description="Protein YOP1">
    <location>
        <begin position="1"/>
        <end position="189"/>
    </location>
</feature>
<feature type="topological domain" description="Cytoplasmic" evidence="1">
    <location>
        <begin position="1"/>
        <end position="35"/>
    </location>
</feature>
<feature type="transmembrane region" description="Helical" evidence="1">
    <location>
        <begin position="36"/>
        <end position="55"/>
    </location>
</feature>
<feature type="topological domain" description="Lumenal" evidence="1">
    <location>
        <begin position="56"/>
        <end position="57"/>
    </location>
</feature>
<feature type="transmembrane region" description="Helical" evidence="1">
    <location>
        <begin position="58"/>
        <end position="78"/>
    </location>
</feature>
<feature type="topological domain" description="Cytoplasmic" evidence="1">
    <location>
        <begin position="79"/>
        <end position="88"/>
    </location>
</feature>
<feature type="transmembrane region" description="Helical" evidence="1">
    <location>
        <begin position="89"/>
        <end position="105"/>
    </location>
</feature>
<feature type="topological domain" description="Lumenal" evidence="1">
    <location>
        <begin position="106"/>
        <end position="108"/>
    </location>
</feature>
<feature type="transmembrane region" description="Helical" evidence="1">
    <location>
        <begin position="109"/>
        <end position="127"/>
    </location>
</feature>
<feature type="topological domain" description="Cytoplasmic" evidence="1">
    <location>
        <begin position="128"/>
        <end position="189"/>
    </location>
</feature>
<reference key="1">
    <citation type="journal article" date="2004" name="Nature">
        <title>Genome evolution in yeasts.</title>
        <authorList>
            <person name="Dujon B."/>
            <person name="Sherman D."/>
            <person name="Fischer G."/>
            <person name="Durrens P."/>
            <person name="Casaregola S."/>
            <person name="Lafontaine I."/>
            <person name="de Montigny J."/>
            <person name="Marck C."/>
            <person name="Neuveglise C."/>
            <person name="Talla E."/>
            <person name="Goffard N."/>
            <person name="Frangeul L."/>
            <person name="Aigle M."/>
            <person name="Anthouard V."/>
            <person name="Babour A."/>
            <person name="Barbe V."/>
            <person name="Barnay S."/>
            <person name="Blanchin S."/>
            <person name="Beckerich J.-M."/>
            <person name="Beyne E."/>
            <person name="Bleykasten C."/>
            <person name="Boisrame A."/>
            <person name="Boyer J."/>
            <person name="Cattolico L."/>
            <person name="Confanioleri F."/>
            <person name="de Daruvar A."/>
            <person name="Despons L."/>
            <person name="Fabre E."/>
            <person name="Fairhead C."/>
            <person name="Ferry-Dumazet H."/>
            <person name="Groppi A."/>
            <person name="Hantraye F."/>
            <person name="Hennequin C."/>
            <person name="Jauniaux N."/>
            <person name="Joyet P."/>
            <person name="Kachouri R."/>
            <person name="Kerrest A."/>
            <person name="Koszul R."/>
            <person name="Lemaire M."/>
            <person name="Lesur I."/>
            <person name="Ma L."/>
            <person name="Muller H."/>
            <person name="Nicaud J.-M."/>
            <person name="Nikolski M."/>
            <person name="Oztas S."/>
            <person name="Ozier-Kalogeropoulos O."/>
            <person name="Pellenz S."/>
            <person name="Potier S."/>
            <person name="Richard G.-F."/>
            <person name="Straub M.-L."/>
            <person name="Suleau A."/>
            <person name="Swennen D."/>
            <person name="Tekaia F."/>
            <person name="Wesolowski-Louvel M."/>
            <person name="Westhof E."/>
            <person name="Wirth B."/>
            <person name="Zeniou-Meyer M."/>
            <person name="Zivanovic Y."/>
            <person name="Bolotin-Fukuhara M."/>
            <person name="Thierry A."/>
            <person name="Bouchier C."/>
            <person name="Caudron B."/>
            <person name="Scarpelli C."/>
            <person name="Gaillardin C."/>
            <person name="Weissenbach J."/>
            <person name="Wincker P."/>
            <person name="Souciet J.-L."/>
        </authorList>
    </citation>
    <scope>NUCLEOTIDE SEQUENCE [LARGE SCALE GENOMIC DNA]</scope>
    <source>
        <strain>CLIB 122 / E 150</strain>
    </source>
</reference>
<protein>
    <recommendedName>
        <fullName>Protein YOP1</fullName>
    </recommendedName>
</protein>
<gene>
    <name type="primary">YOP1</name>
    <name type="ordered locus">YALI0B19668g</name>
</gene>
<comment type="function">
    <text evidence="1">Required to generate and maintain the structure of the tubular endoplasmic reticulum network and the vacuole. Induces high curvature in membranes and causes membrane tubule formation. Involved in membrane/vesicle trafficking.</text>
</comment>
<comment type="subunit">
    <text evidence="1">Oligomer.</text>
</comment>
<comment type="subcellular location">
    <subcellularLocation>
        <location evidence="1">Endoplasmic reticulum membrane</location>
        <topology evidence="1">Multi-pass membrane protein</topology>
    </subcellularLocation>
    <subcellularLocation>
        <location evidence="1">Golgi apparatus membrane</location>
        <topology evidence="2">Multi-pass membrane protein</topology>
    </subcellularLocation>
</comment>
<comment type="domain">
    <text evidence="1">The short lumenal loops between transmembrane domains 1 and 2 and between transmembrane domains 3 and 4 may impart a wedge-like configuration, thus deforming membranes.</text>
</comment>
<comment type="similarity">
    <text evidence="3">Belongs to the DP1 family.</text>
</comment>
<proteinExistence type="inferred from homology"/>
<name>YOP1_YARLI</name>